<protein>
    <recommendedName>
        <fullName evidence="1">Chromosomal replication initiator protein DnaA</fullName>
    </recommendedName>
</protein>
<comment type="function">
    <text evidence="1">Plays an essential role in the initiation and regulation of chromosomal replication. ATP-DnaA binds to the origin of replication (oriC) to initiate formation of the DNA replication initiation complex once per cell cycle. Binds the DnaA box (a 9 base pair repeat at the origin) and separates the double-stranded (ds)DNA. Forms a right-handed helical filament on oriC DNA; dsDNA binds to the exterior of the filament while single-stranded (ss)DNA is stabiized in the filament's interior. The ATP-DnaA-oriC complex binds and stabilizes one strand of the AT-rich DNA unwinding element (DUE), permitting loading of DNA polymerase. After initiation quickly degrades to an ADP-DnaA complex that is not apt for DNA replication. Binds acidic phospholipids.</text>
</comment>
<comment type="subunit">
    <text evidence="1">Oligomerizes as a right-handed, spiral filament on DNA at oriC.</text>
</comment>
<comment type="subcellular location">
    <subcellularLocation>
        <location evidence="1">Cytoplasm</location>
    </subcellularLocation>
</comment>
<comment type="domain">
    <text evidence="1">Domain I is involved in oligomerization and binding regulators, domain II is flexibile and of varying length in different bacteria, domain III forms the AAA+ region, while domain IV binds dsDNA.</text>
</comment>
<comment type="similarity">
    <text evidence="1">Belongs to the DnaA family.</text>
</comment>
<sequence length="466" mass="52598">MSLSLWQQCLARLQDELPATEFSMWIRPLQAELSDNTLALYAPNRFVLDWVRDKYLNNINGLLNTFCGADAPQLRFEVGTKPVTQTLKTPVHNVVAPAQTTTAQPQRVAPAARSGWDNVPAPAEPTYRSNVNVKHTFDNFVEGKSNQLARAAARQVADNPGGAYNPLFLYGGTGLGKTHLLHAVGNGIMARKPNAKVVYMHSERFVQDMVKALQNNAIEEFKRYYRSVDALLIDDIQFFANKERSQEEFFHTFNALLEGNQQIILTSDRYPKEINGVEDRLKSRFGWGLTVAIEPPELETRVAILMKKADENDIRLPGEVAFFIAKRLRSNVRELEGALNRVIANANFTGRAITIDFVREALRDLLALQEKLVTIDNIQKTVAEYYKIKIADLLSKRRSRSVARPRQMAMALAKELTNHSLPEIGDAFGGRDHTTVLHACRKIEQLREESHDIKEDFSNLIRTLSS</sequence>
<keyword id="KW-0067">ATP-binding</keyword>
<keyword id="KW-0963">Cytoplasm</keyword>
<keyword id="KW-0235">DNA replication</keyword>
<keyword id="KW-0238">DNA-binding</keyword>
<keyword id="KW-0446">Lipid-binding</keyword>
<keyword id="KW-0547">Nucleotide-binding</keyword>
<gene>
    <name evidence="1" type="primary">dnaA</name>
    <name type="ordered locus">SeAg_B4066</name>
</gene>
<organism>
    <name type="scientific">Salmonella agona (strain SL483)</name>
    <dbReference type="NCBI Taxonomy" id="454166"/>
    <lineage>
        <taxon>Bacteria</taxon>
        <taxon>Pseudomonadati</taxon>
        <taxon>Pseudomonadota</taxon>
        <taxon>Gammaproteobacteria</taxon>
        <taxon>Enterobacterales</taxon>
        <taxon>Enterobacteriaceae</taxon>
        <taxon>Salmonella</taxon>
    </lineage>
</organism>
<reference key="1">
    <citation type="journal article" date="2011" name="J. Bacteriol.">
        <title>Comparative genomics of 28 Salmonella enterica isolates: evidence for CRISPR-mediated adaptive sublineage evolution.</title>
        <authorList>
            <person name="Fricke W.F."/>
            <person name="Mammel M.K."/>
            <person name="McDermott P.F."/>
            <person name="Tartera C."/>
            <person name="White D.G."/>
            <person name="Leclerc J.E."/>
            <person name="Ravel J."/>
            <person name="Cebula T.A."/>
        </authorList>
    </citation>
    <scope>NUCLEOTIDE SEQUENCE [LARGE SCALE GENOMIC DNA]</scope>
    <source>
        <strain>SL483</strain>
    </source>
</reference>
<evidence type="ECO:0000255" key="1">
    <source>
        <dbReference type="HAMAP-Rule" id="MF_00377"/>
    </source>
</evidence>
<proteinExistence type="inferred from homology"/>
<feature type="chain" id="PRO_1000122008" description="Chromosomal replication initiator protein DnaA">
    <location>
        <begin position="1"/>
        <end position="466"/>
    </location>
</feature>
<feature type="region of interest" description="Domain I, interacts with DnaA modulators" evidence="1">
    <location>
        <begin position="1"/>
        <end position="86"/>
    </location>
</feature>
<feature type="region of interest" description="Domain II" evidence="1">
    <location>
        <begin position="86"/>
        <end position="129"/>
    </location>
</feature>
<feature type="region of interest" description="Domain III, AAA+ region" evidence="1">
    <location>
        <begin position="130"/>
        <end position="346"/>
    </location>
</feature>
<feature type="region of interest" description="Domain IV, binds dsDNA" evidence="1">
    <location>
        <begin position="347"/>
        <end position="466"/>
    </location>
</feature>
<feature type="binding site" evidence="1">
    <location>
        <position position="174"/>
    </location>
    <ligand>
        <name>ATP</name>
        <dbReference type="ChEBI" id="CHEBI:30616"/>
    </ligand>
</feature>
<feature type="binding site" evidence="1">
    <location>
        <position position="176"/>
    </location>
    <ligand>
        <name>ATP</name>
        <dbReference type="ChEBI" id="CHEBI:30616"/>
    </ligand>
</feature>
<feature type="binding site" evidence="1">
    <location>
        <position position="177"/>
    </location>
    <ligand>
        <name>ATP</name>
        <dbReference type="ChEBI" id="CHEBI:30616"/>
    </ligand>
</feature>
<feature type="binding site" evidence="1">
    <location>
        <position position="178"/>
    </location>
    <ligand>
        <name>ATP</name>
        <dbReference type="ChEBI" id="CHEBI:30616"/>
    </ligand>
</feature>
<name>DNAA_SALA4</name>
<accession>B5EYX2</accession>
<dbReference type="EMBL" id="CP001138">
    <property type="protein sequence ID" value="ACH50055.1"/>
    <property type="molecule type" value="Genomic_DNA"/>
</dbReference>
<dbReference type="RefSeq" id="WP_000059093.1">
    <property type="nucleotide sequence ID" value="NC_011149.1"/>
</dbReference>
<dbReference type="SMR" id="B5EYX2"/>
<dbReference type="KEGG" id="sea:SeAg_B4066"/>
<dbReference type="HOGENOM" id="CLU_026910_0_1_6"/>
<dbReference type="Proteomes" id="UP000008819">
    <property type="component" value="Chromosome"/>
</dbReference>
<dbReference type="GO" id="GO:0005737">
    <property type="term" value="C:cytoplasm"/>
    <property type="evidence" value="ECO:0007669"/>
    <property type="project" value="UniProtKB-SubCell"/>
</dbReference>
<dbReference type="GO" id="GO:0005886">
    <property type="term" value="C:plasma membrane"/>
    <property type="evidence" value="ECO:0007669"/>
    <property type="project" value="TreeGrafter"/>
</dbReference>
<dbReference type="GO" id="GO:0005524">
    <property type="term" value="F:ATP binding"/>
    <property type="evidence" value="ECO:0007669"/>
    <property type="project" value="UniProtKB-UniRule"/>
</dbReference>
<dbReference type="GO" id="GO:0016887">
    <property type="term" value="F:ATP hydrolysis activity"/>
    <property type="evidence" value="ECO:0007669"/>
    <property type="project" value="InterPro"/>
</dbReference>
<dbReference type="GO" id="GO:0003688">
    <property type="term" value="F:DNA replication origin binding"/>
    <property type="evidence" value="ECO:0007669"/>
    <property type="project" value="UniProtKB-UniRule"/>
</dbReference>
<dbReference type="GO" id="GO:0008289">
    <property type="term" value="F:lipid binding"/>
    <property type="evidence" value="ECO:0007669"/>
    <property type="project" value="UniProtKB-KW"/>
</dbReference>
<dbReference type="GO" id="GO:0006270">
    <property type="term" value="P:DNA replication initiation"/>
    <property type="evidence" value="ECO:0007669"/>
    <property type="project" value="UniProtKB-UniRule"/>
</dbReference>
<dbReference type="GO" id="GO:0006275">
    <property type="term" value="P:regulation of DNA replication"/>
    <property type="evidence" value="ECO:0007669"/>
    <property type="project" value="UniProtKB-UniRule"/>
</dbReference>
<dbReference type="CDD" id="cd00009">
    <property type="entry name" value="AAA"/>
    <property type="match status" value="1"/>
</dbReference>
<dbReference type="CDD" id="cd06571">
    <property type="entry name" value="Bac_DnaA_C"/>
    <property type="match status" value="1"/>
</dbReference>
<dbReference type="FunFam" id="1.10.1750.10:FF:000001">
    <property type="entry name" value="Chromosomal replication initiator protein DnaA"/>
    <property type="match status" value="1"/>
</dbReference>
<dbReference type="FunFam" id="1.10.8.60:FF:000003">
    <property type="entry name" value="Chromosomal replication initiator protein DnaA"/>
    <property type="match status" value="1"/>
</dbReference>
<dbReference type="FunFam" id="3.30.300.180:FF:000001">
    <property type="entry name" value="Chromosomal replication initiator protein DnaA"/>
    <property type="match status" value="1"/>
</dbReference>
<dbReference type="FunFam" id="3.40.50.300:FF:000103">
    <property type="entry name" value="Chromosomal replication initiator protein DnaA"/>
    <property type="match status" value="1"/>
</dbReference>
<dbReference type="Gene3D" id="1.10.1750.10">
    <property type="match status" value="1"/>
</dbReference>
<dbReference type="Gene3D" id="1.10.8.60">
    <property type="match status" value="1"/>
</dbReference>
<dbReference type="Gene3D" id="3.30.300.180">
    <property type="match status" value="1"/>
</dbReference>
<dbReference type="Gene3D" id="3.40.50.300">
    <property type="entry name" value="P-loop containing nucleotide triphosphate hydrolases"/>
    <property type="match status" value="1"/>
</dbReference>
<dbReference type="HAMAP" id="MF_00377">
    <property type="entry name" value="DnaA_bact"/>
    <property type="match status" value="1"/>
</dbReference>
<dbReference type="InterPro" id="IPR003593">
    <property type="entry name" value="AAA+_ATPase"/>
</dbReference>
<dbReference type="InterPro" id="IPR001957">
    <property type="entry name" value="Chromosome_initiator_DnaA"/>
</dbReference>
<dbReference type="InterPro" id="IPR020591">
    <property type="entry name" value="Chromosome_initiator_DnaA-like"/>
</dbReference>
<dbReference type="InterPro" id="IPR018312">
    <property type="entry name" value="Chromosome_initiator_DnaA_CS"/>
</dbReference>
<dbReference type="InterPro" id="IPR013159">
    <property type="entry name" value="DnaA_C"/>
</dbReference>
<dbReference type="InterPro" id="IPR013317">
    <property type="entry name" value="DnaA_dom"/>
</dbReference>
<dbReference type="InterPro" id="IPR024633">
    <property type="entry name" value="DnaA_N_dom"/>
</dbReference>
<dbReference type="InterPro" id="IPR038454">
    <property type="entry name" value="DnaA_N_sf"/>
</dbReference>
<dbReference type="InterPro" id="IPR027417">
    <property type="entry name" value="P-loop_NTPase"/>
</dbReference>
<dbReference type="InterPro" id="IPR010921">
    <property type="entry name" value="Trp_repressor/repl_initiator"/>
</dbReference>
<dbReference type="NCBIfam" id="TIGR00362">
    <property type="entry name" value="DnaA"/>
    <property type="match status" value="1"/>
</dbReference>
<dbReference type="PANTHER" id="PTHR30050">
    <property type="entry name" value="CHROMOSOMAL REPLICATION INITIATOR PROTEIN DNAA"/>
    <property type="match status" value="1"/>
</dbReference>
<dbReference type="PANTHER" id="PTHR30050:SF2">
    <property type="entry name" value="CHROMOSOMAL REPLICATION INITIATOR PROTEIN DNAA"/>
    <property type="match status" value="1"/>
</dbReference>
<dbReference type="Pfam" id="PF00308">
    <property type="entry name" value="Bac_DnaA"/>
    <property type="match status" value="1"/>
</dbReference>
<dbReference type="Pfam" id="PF08299">
    <property type="entry name" value="Bac_DnaA_C"/>
    <property type="match status" value="1"/>
</dbReference>
<dbReference type="Pfam" id="PF11638">
    <property type="entry name" value="DnaA_N"/>
    <property type="match status" value="1"/>
</dbReference>
<dbReference type="PRINTS" id="PR00051">
    <property type="entry name" value="DNAA"/>
</dbReference>
<dbReference type="SMART" id="SM00382">
    <property type="entry name" value="AAA"/>
    <property type="match status" value="1"/>
</dbReference>
<dbReference type="SMART" id="SM00760">
    <property type="entry name" value="Bac_DnaA_C"/>
    <property type="match status" value="1"/>
</dbReference>
<dbReference type="SUPFAM" id="SSF52540">
    <property type="entry name" value="P-loop containing nucleoside triphosphate hydrolases"/>
    <property type="match status" value="1"/>
</dbReference>
<dbReference type="SUPFAM" id="SSF48295">
    <property type="entry name" value="TrpR-like"/>
    <property type="match status" value="1"/>
</dbReference>
<dbReference type="PROSITE" id="PS01008">
    <property type="entry name" value="DNAA"/>
    <property type="match status" value="1"/>
</dbReference>